<keyword id="KW-0963">Cytoplasm</keyword>
<keyword id="KW-0227">DNA damage</keyword>
<keyword id="KW-0228">DNA excision</keyword>
<keyword id="KW-0234">DNA repair</keyword>
<keyword id="KW-0238">DNA-binding</keyword>
<keyword id="KW-0378">Hydrolase</keyword>
<feature type="chain" id="PRO_1000188956" description="G/U mismatch-specific DNA glycosylase">
    <location>
        <begin position="1"/>
        <end position="168"/>
    </location>
</feature>
<evidence type="ECO:0000255" key="1">
    <source>
        <dbReference type="HAMAP-Rule" id="MF_01956"/>
    </source>
</evidence>
<sequence length="168" mass="18673">MVEDILAPGLRVVFCGINPGLSSAGTGFPFAHPANRFWKVIYQAGFTDRQLKPQEAQHLLDYRCGVTKLVDRPTVQANEVSKQELHAGGRKLIEKIEDYQPQALAILGKQAYEQGFSQRGAQWGKQTLTIGSTQIWVLPNPSGLSRVSLEKLVEAYRELDQALVVRGR</sequence>
<dbReference type="EC" id="3.2.2.28" evidence="1"/>
<dbReference type="EMBL" id="CP000948">
    <property type="protein sequence ID" value="ACB04153.1"/>
    <property type="molecule type" value="Genomic_DNA"/>
</dbReference>
<dbReference type="RefSeq" id="WP_000228937.1">
    <property type="nucleotide sequence ID" value="NC_010473.1"/>
</dbReference>
<dbReference type="SMR" id="B1XG73"/>
<dbReference type="GeneID" id="93778924"/>
<dbReference type="KEGG" id="ecd:ECDH10B_3243"/>
<dbReference type="HOGENOM" id="CLU_042829_3_1_6"/>
<dbReference type="GO" id="GO:0005737">
    <property type="term" value="C:cytoplasm"/>
    <property type="evidence" value="ECO:0007669"/>
    <property type="project" value="UniProtKB-SubCell"/>
</dbReference>
<dbReference type="GO" id="GO:0003677">
    <property type="term" value="F:DNA binding"/>
    <property type="evidence" value="ECO:0007669"/>
    <property type="project" value="UniProtKB-KW"/>
</dbReference>
<dbReference type="GO" id="GO:0008263">
    <property type="term" value="F:pyrimidine-specific mismatch base pair DNA N-glycosylase activity"/>
    <property type="evidence" value="ECO:0007669"/>
    <property type="project" value="UniProtKB-UniRule"/>
</dbReference>
<dbReference type="GO" id="GO:0004844">
    <property type="term" value="F:uracil DNA N-glycosylase activity"/>
    <property type="evidence" value="ECO:0007669"/>
    <property type="project" value="TreeGrafter"/>
</dbReference>
<dbReference type="GO" id="GO:0006285">
    <property type="term" value="P:base-excision repair, AP site formation"/>
    <property type="evidence" value="ECO:0007669"/>
    <property type="project" value="UniProtKB-UniRule"/>
</dbReference>
<dbReference type="CDD" id="cd10028">
    <property type="entry name" value="UDG-F2_TDG_MUG"/>
    <property type="match status" value="1"/>
</dbReference>
<dbReference type="FunFam" id="3.40.470.10:FF:000003">
    <property type="entry name" value="G/U mismatch-specific DNA glycosylase"/>
    <property type="match status" value="1"/>
</dbReference>
<dbReference type="Gene3D" id="3.40.470.10">
    <property type="entry name" value="Uracil-DNA glycosylase-like domain"/>
    <property type="match status" value="1"/>
</dbReference>
<dbReference type="HAMAP" id="MF_01956">
    <property type="entry name" value="MUG"/>
    <property type="match status" value="1"/>
</dbReference>
<dbReference type="InterPro" id="IPR015637">
    <property type="entry name" value="MUG/TDG"/>
</dbReference>
<dbReference type="InterPro" id="IPR023502">
    <property type="entry name" value="MUG_bact"/>
</dbReference>
<dbReference type="InterPro" id="IPR005122">
    <property type="entry name" value="Uracil-DNA_glycosylase-like"/>
</dbReference>
<dbReference type="InterPro" id="IPR036895">
    <property type="entry name" value="Uracil-DNA_glycosylase-like_sf"/>
</dbReference>
<dbReference type="NCBIfam" id="NF007570">
    <property type="entry name" value="PRK10201.1"/>
    <property type="match status" value="1"/>
</dbReference>
<dbReference type="PANTHER" id="PTHR12159">
    <property type="entry name" value="G/T AND G/U MISMATCH-SPECIFIC DNA GLYCOSYLASE"/>
    <property type="match status" value="1"/>
</dbReference>
<dbReference type="PANTHER" id="PTHR12159:SF9">
    <property type="entry name" value="G_T MISMATCH-SPECIFIC THYMINE DNA GLYCOSYLASE"/>
    <property type="match status" value="1"/>
</dbReference>
<dbReference type="Pfam" id="PF03167">
    <property type="entry name" value="UDG"/>
    <property type="match status" value="1"/>
</dbReference>
<dbReference type="SUPFAM" id="SSF52141">
    <property type="entry name" value="Uracil-DNA glycosylase-like"/>
    <property type="match status" value="1"/>
</dbReference>
<proteinExistence type="inferred from homology"/>
<gene>
    <name evidence="1" type="primary">mug</name>
    <name type="ordered locus">ECDH10B_3243</name>
</gene>
<name>MUG_ECODH</name>
<protein>
    <recommendedName>
        <fullName evidence="1">G/U mismatch-specific DNA glycosylase</fullName>
        <ecNumber evidence="1">3.2.2.28</ecNumber>
    </recommendedName>
    <alternativeName>
        <fullName evidence="1">Double-strand-specific uracil glycosylase</fullName>
    </alternativeName>
    <alternativeName>
        <fullName evidence="1">Mismatch-specific uracil DNA-glycosylase</fullName>
        <shortName evidence="1">MUG</shortName>
    </alternativeName>
</protein>
<comment type="function">
    <text evidence="1">Excises ethenocytosine and uracil, which can arise by alkylation or deamination of cytosine, respectively, from the corresponding mispairs with guanine in ds-DNA. It is capable of hydrolyzing the carbon-nitrogen bond between the sugar-phosphate backbone of the DNA and the mispaired base. The complementary strand guanine functions in substrate recognition. Required for DNA damage lesion repair in stationary-phase cells.</text>
</comment>
<comment type="catalytic activity">
    <reaction evidence="1">
        <text>Specifically hydrolyzes mismatched double-stranded DNA and polynucleotides, releasing free uracil.</text>
        <dbReference type="EC" id="3.2.2.28"/>
    </reaction>
</comment>
<comment type="subunit">
    <text evidence="1">Binds DNA as a monomer.</text>
</comment>
<comment type="subcellular location">
    <subcellularLocation>
        <location evidence="1">Cytoplasm</location>
    </subcellularLocation>
</comment>
<comment type="similarity">
    <text evidence="1">Belongs to the uracil-DNA glycosylase (UDG) superfamily. TDG/mug family.</text>
</comment>
<reference key="1">
    <citation type="journal article" date="2008" name="J. Bacteriol.">
        <title>The complete genome sequence of Escherichia coli DH10B: insights into the biology of a laboratory workhorse.</title>
        <authorList>
            <person name="Durfee T."/>
            <person name="Nelson R."/>
            <person name="Baldwin S."/>
            <person name="Plunkett G. III"/>
            <person name="Burland V."/>
            <person name="Mau B."/>
            <person name="Petrosino J.F."/>
            <person name="Qin X."/>
            <person name="Muzny D.M."/>
            <person name="Ayele M."/>
            <person name="Gibbs R.A."/>
            <person name="Csorgo B."/>
            <person name="Posfai G."/>
            <person name="Weinstock G.M."/>
            <person name="Blattner F.R."/>
        </authorList>
    </citation>
    <scope>NUCLEOTIDE SEQUENCE [LARGE SCALE GENOMIC DNA]</scope>
    <source>
        <strain>K12 / DH10B</strain>
    </source>
</reference>
<accession>B1XG73</accession>
<organism>
    <name type="scientific">Escherichia coli (strain K12 / DH10B)</name>
    <dbReference type="NCBI Taxonomy" id="316385"/>
    <lineage>
        <taxon>Bacteria</taxon>
        <taxon>Pseudomonadati</taxon>
        <taxon>Pseudomonadota</taxon>
        <taxon>Gammaproteobacteria</taxon>
        <taxon>Enterobacterales</taxon>
        <taxon>Enterobacteriaceae</taxon>
        <taxon>Escherichia</taxon>
    </lineage>
</organism>